<reference key="1">
    <citation type="journal article" date="2000" name="Nucleic Acids Res.">
        <title>Genome sequences of Chlamydia trachomatis MoPn and Chlamydia pneumoniae AR39.</title>
        <authorList>
            <person name="Read T.D."/>
            <person name="Brunham R.C."/>
            <person name="Shen C."/>
            <person name="Gill S.R."/>
            <person name="Heidelberg J.F."/>
            <person name="White O."/>
            <person name="Hickey E.K."/>
            <person name="Peterson J.D."/>
            <person name="Utterback T.R."/>
            <person name="Berry K.J."/>
            <person name="Bass S."/>
            <person name="Linher K.D."/>
            <person name="Weidman J.F."/>
            <person name="Khouri H.M."/>
            <person name="Craven B."/>
            <person name="Bowman C."/>
            <person name="Dodson R.J."/>
            <person name="Gwinn M.L."/>
            <person name="Nelson W.C."/>
            <person name="DeBoy R.T."/>
            <person name="Kolonay J.F."/>
            <person name="McClarty G."/>
            <person name="Salzberg S.L."/>
            <person name="Eisen J.A."/>
            <person name="Fraser C.M."/>
        </authorList>
    </citation>
    <scope>NUCLEOTIDE SEQUENCE [LARGE SCALE GENOMIC DNA]</scope>
    <source>
        <strain>MoPn / Nigg</strain>
    </source>
</reference>
<gene>
    <name type="primary">dnaE</name>
    <name type="ordered locus">TC_0832</name>
</gene>
<evidence type="ECO:0000250" key="1"/>
<evidence type="ECO:0000305" key="2"/>
<proteinExistence type="inferred from homology"/>
<dbReference type="EC" id="2.7.7.7"/>
<dbReference type="EMBL" id="AE002160">
    <property type="protein sequence ID" value="AAF39632.1"/>
    <property type="molecule type" value="Genomic_DNA"/>
</dbReference>
<dbReference type="PIR" id="H81660">
    <property type="entry name" value="H81660"/>
</dbReference>
<dbReference type="RefSeq" id="WP_010231707.1">
    <property type="nucleotide sequence ID" value="NZ_CP063055.1"/>
</dbReference>
<dbReference type="SMR" id="Q9PJJ7"/>
<dbReference type="GeneID" id="1246200"/>
<dbReference type="KEGG" id="cmu:TC_0832"/>
<dbReference type="eggNOG" id="COG0587">
    <property type="taxonomic scope" value="Bacteria"/>
</dbReference>
<dbReference type="HOGENOM" id="CLU_001600_0_0_0"/>
<dbReference type="OrthoDB" id="9803237at2"/>
<dbReference type="Proteomes" id="UP000000800">
    <property type="component" value="Chromosome"/>
</dbReference>
<dbReference type="GO" id="GO:0005737">
    <property type="term" value="C:cytoplasm"/>
    <property type="evidence" value="ECO:0007669"/>
    <property type="project" value="UniProtKB-SubCell"/>
</dbReference>
<dbReference type="GO" id="GO:0008408">
    <property type="term" value="F:3'-5' exonuclease activity"/>
    <property type="evidence" value="ECO:0007669"/>
    <property type="project" value="InterPro"/>
</dbReference>
<dbReference type="GO" id="GO:0003887">
    <property type="term" value="F:DNA-directed DNA polymerase activity"/>
    <property type="evidence" value="ECO:0007669"/>
    <property type="project" value="UniProtKB-KW"/>
</dbReference>
<dbReference type="GO" id="GO:0006260">
    <property type="term" value="P:DNA replication"/>
    <property type="evidence" value="ECO:0007669"/>
    <property type="project" value="UniProtKB-KW"/>
</dbReference>
<dbReference type="CDD" id="cd04485">
    <property type="entry name" value="DnaE_OBF"/>
    <property type="match status" value="1"/>
</dbReference>
<dbReference type="CDD" id="cd12113">
    <property type="entry name" value="PHP_PolIIIA_DnaE3"/>
    <property type="match status" value="1"/>
</dbReference>
<dbReference type="Gene3D" id="1.10.150.870">
    <property type="match status" value="1"/>
</dbReference>
<dbReference type="Gene3D" id="1.10.10.1600">
    <property type="entry name" value="Bacterial DNA polymerase III alpha subunit, thumb domain"/>
    <property type="match status" value="1"/>
</dbReference>
<dbReference type="Gene3D" id="3.20.20.140">
    <property type="entry name" value="Metal-dependent hydrolases"/>
    <property type="match status" value="1"/>
</dbReference>
<dbReference type="InterPro" id="IPR011708">
    <property type="entry name" value="DNA_pol3_alpha_NTPase_dom"/>
</dbReference>
<dbReference type="InterPro" id="IPR041931">
    <property type="entry name" value="DNA_pol3_alpha_thumb_dom"/>
</dbReference>
<dbReference type="InterPro" id="IPR040982">
    <property type="entry name" value="DNA_pol3_finger"/>
</dbReference>
<dbReference type="InterPro" id="IPR004805">
    <property type="entry name" value="DnaE2/DnaE/PolC"/>
</dbReference>
<dbReference type="InterPro" id="IPR029460">
    <property type="entry name" value="DNAPol_HHH"/>
</dbReference>
<dbReference type="InterPro" id="IPR004013">
    <property type="entry name" value="PHP_dom"/>
</dbReference>
<dbReference type="InterPro" id="IPR003141">
    <property type="entry name" value="Pol/His_phosphatase_N"/>
</dbReference>
<dbReference type="InterPro" id="IPR016195">
    <property type="entry name" value="Pol/histidinol_Pase-like"/>
</dbReference>
<dbReference type="InterPro" id="IPR010994">
    <property type="entry name" value="RuvA_2-like"/>
</dbReference>
<dbReference type="NCBIfam" id="TIGR00594">
    <property type="entry name" value="polc"/>
    <property type="match status" value="1"/>
</dbReference>
<dbReference type="NCBIfam" id="NF004226">
    <property type="entry name" value="PRK05673.1"/>
    <property type="match status" value="1"/>
</dbReference>
<dbReference type="PANTHER" id="PTHR32294">
    <property type="entry name" value="DNA POLYMERASE III SUBUNIT ALPHA"/>
    <property type="match status" value="1"/>
</dbReference>
<dbReference type="PANTHER" id="PTHR32294:SF0">
    <property type="entry name" value="DNA POLYMERASE III SUBUNIT ALPHA"/>
    <property type="match status" value="1"/>
</dbReference>
<dbReference type="Pfam" id="PF07733">
    <property type="entry name" value="DNA_pol3_alpha"/>
    <property type="match status" value="1"/>
</dbReference>
<dbReference type="Pfam" id="PF17657">
    <property type="entry name" value="DNA_pol3_finger"/>
    <property type="match status" value="1"/>
</dbReference>
<dbReference type="Pfam" id="PF14579">
    <property type="entry name" value="HHH_6"/>
    <property type="match status" value="1"/>
</dbReference>
<dbReference type="Pfam" id="PF02811">
    <property type="entry name" value="PHP"/>
    <property type="match status" value="1"/>
</dbReference>
<dbReference type="SMART" id="SM00481">
    <property type="entry name" value="POLIIIAc"/>
    <property type="match status" value="1"/>
</dbReference>
<dbReference type="SUPFAM" id="SSF89550">
    <property type="entry name" value="PHP domain-like"/>
    <property type="match status" value="1"/>
</dbReference>
<dbReference type="SUPFAM" id="SSF47781">
    <property type="entry name" value="RuvA domain 2-like"/>
    <property type="match status" value="1"/>
</dbReference>
<sequence length="1237" mass="139894">MTWIPLHCHSQYSILDATCSIKKFVAKAVEYHIPALALTDHGNLFGAVDFYKTCKQNAIKPIIGCELYVAPSSRFDKKKERKSQVANHLILLCKDEEGYRNLCLLSSLAYTEGFYYFPRIDRELLKQHSKGLICLSACLSGSIAQAALESEEALEKDLLWYQDLFQEDFFSEVQLHKSSEEKIALFEEEWLRQNYYQFIEKQLKVKDAVLTVSKRLGISSVATNDIHYLDPDDWLAHEILLNVQSREPIRTAKQNTYVPNPKRKTYPSREFYFKSPQEMAELFADHPETISNTLIVADRCNLELDFVTKHYPIYVPEDLQKKGSYSEEERYNASSAFLEQLCEQGLKTKYTPELLGHIAQKFPEKDPLTVVKERLSLESTIIISKGMCDYLLIVWDIINWAKDHGIPVGPGRGSGAGSVMLFLLGITEIEPIRFDLFFERFINPERLSYPDIDIDICMIGREKVINYAIERHGKENVAQIITFGTMKAKMAIKDVGRTLDTPLSKVNLIAKKIPDLNATIASALESDPDLRQLYIDDAEAAEIIDMAKKLEGSIRNTGVHAAGVIICGDPLTNHIPICVPKDSSMISTQYSMKPVESVGMLKVDFLGLKTLTSIHVATKAIYKKTGILLQAATLPLNDRNTFSLLHQGKTMGIFQMESRGMQELAKNLRPDAFEEIIAIGALYRPGPMDMIPSFINRKHGKENIEYDHPLMEPILKETFGIMVYQEQVMQIAGSLAKYSLGEGDVLRRAMGKKDHEQMVKEREKFCSRASANGIDPSIATTIFDKMEKFASYGFNKSHAAAYGLITYTTAYLKANYPKEWLAALLTCDYDDIEKVGKLIQEAHSMNIPVLPPDINESGQDFEATQEGIRFSLGAVKGVGVSIVDSIVEEREKNGPYRSLQDFVQRSDFKKVTKKQLESLVDAGSFNCFEPNKDLAIAILNDLYDTFSREKKEAATGVLTFFSLNSMTKDPVKVTISPENIVRRSDKELLKREKELLGVYLTAHPMDAVKHLLPFLSVVQSKDFEGLPHGSVVRTVFLIDKVTTKISSVEHKKFALLQVSDEEDSYELPIWSDMYAEYQDLLEEDRLIYAILTIDRRSDSLRLSCRWMRDLSSVNDTVITECDEVYDRLKNQKIYSSTKKSTGGQSQAMVKKEEPKAIPPVTISLDLNRLRHSHLFTLKGLIRKYSGSRALSLVFTKDNQRIASISPDSDFFVTEDISAFLQEIETTDIPARILATAV</sequence>
<keyword id="KW-0963">Cytoplasm</keyword>
<keyword id="KW-0235">DNA replication</keyword>
<keyword id="KW-0239">DNA-directed DNA polymerase</keyword>
<keyword id="KW-0548">Nucleotidyltransferase</keyword>
<keyword id="KW-0808">Transferase</keyword>
<comment type="function">
    <text evidence="1">DNA polymerase III is a complex, multichain enzyme responsible for most of the replicative synthesis in bacteria. This DNA polymerase also exhibits 3' to 5' exonuclease activity. The alpha chain is the DNA polymerase (By similarity).</text>
</comment>
<comment type="catalytic activity">
    <reaction>
        <text>DNA(n) + a 2'-deoxyribonucleoside 5'-triphosphate = DNA(n+1) + diphosphate</text>
        <dbReference type="Rhea" id="RHEA:22508"/>
        <dbReference type="Rhea" id="RHEA-COMP:17339"/>
        <dbReference type="Rhea" id="RHEA-COMP:17340"/>
        <dbReference type="ChEBI" id="CHEBI:33019"/>
        <dbReference type="ChEBI" id="CHEBI:61560"/>
        <dbReference type="ChEBI" id="CHEBI:173112"/>
        <dbReference type="EC" id="2.7.7.7"/>
    </reaction>
</comment>
<comment type="subunit">
    <text evidence="1">DNA polymerase III contains a core (composed of alpha, epsilon and theta chains) that associates with a tau subunit. This core dimerizes to form the PolIII' complex. PolIII' associates with the gamma complex (composed of gamma, delta, delta', psi and chi chains) and with the beta chain to form the complete DNA polymerase III complex (By similarity).</text>
</comment>
<comment type="subcellular location">
    <subcellularLocation>
        <location evidence="1">Cytoplasm</location>
    </subcellularLocation>
</comment>
<comment type="similarity">
    <text evidence="2">Belongs to the DNA polymerase type-C family. DnaE subfamily.</text>
</comment>
<accession>Q9PJJ7</accession>
<organism>
    <name type="scientific">Chlamydia muridarum (strain MoPn / Nigg)</name>
    <dbReference type="NCBI Taxonomy" id="243161"/>
    <lineage>
        <taxon>Bacteria</taxon>
        <taxon>Pseudomonadati</taxon>
        <taxon>Chlamydiota</taxon>
        <taxon>Chlamydiia</taxon>
        <taxon>Chlamydiales</taxon>
        <taxon>Chlamydiaceae</taxon>
        <taxon>Chlamydia/Chlamydophila group</taxon>
        <taxon>Chlamydia</taxon>
    </lineage>
</organism>
<feature type="chain" id="PRO_0000103317" description="DNA polymerase III subunit alpha">
    <location>
        <begin position="1"/>
        <end position="1237"/>
    </location>
</feature>
<name>DPO3A_CHLMU</name>
<protein>
    <recommendedName>
        <fullName>DNA polymerase III subunit alpha</fullName>
        <ecNumber>2.7.7.7</ecNumber>
    </recommendedName>
</protein>